<feature type="chain" id="PRO_1000096829" description="Phosphopantetheine adenylyltransferase">
    <location>
        <begin position="1"/>
        <end position="164"/>
    </location>
</feature>
<feature type="binding site" evidence="1">
    <location>
        <begin position="9"/>
        <end position="10"/>
    </location>
    <ligand>
        <name>ATP</name>
        <dbReference type="ChEBI" id="CHEBI:30616"/>
    </ligand>
</feature>
<feature type="binding site" evidence="1">
    <location>
        <position position="9"/>
    </location>
    <ligand>
        <name>substrate</name>
    </ligand>
</feature>
<feature type="binding site" evidence="1">
    <location>
        <position position="17"/>
    </location>
    <ligand>
        <name>ATP</name>
        <dbReference type="ChEBI" id="CHEBI:30616"/>
    </ligand>
</feature>
<feature type="binding site" evidence="1">
    <location>
        <position position="41"/>
    </location>
    <ligand>
        <name>substrate</name>
    </ligand>
</feature>
<feature type="binding site" evidence="1">
    <location>
        <position position="78"/>
    </location>
    <ligand>
        <name>substrate</name>
    </ligand>
</feature>
<feature type="binding site" evidence="1">
    <location>
        <position position="92"/>
    </location>
    <ligand>
        <name>substrate</name>
    </ligand>
</feature>
<feature type="binding site" evidence="1">
    <location>
        <begin position="93"/>
        <end position="95"/>
    </location>
    <ligand>
        <name>ATP</name>
        <dbReference type="ChEBI" id="CHEBI:30616"/>
    </ligand>
</feature>
<feature type="binding site" evidence="1">
    <location>
        <position position="103"/>
    </location>
    <ligand>
        <name>ATP</name>
        <dbReference type="ChEBI" id="CHEBI:30616"/>
    </ligand>
</feature>
<feature type="binding site" evidence="1">
    <location>
        <begin position="128"/>
        <end position="134"/>
    </location>
    <ligand>
        <name>ATP</name>
        <dbReference type="ChEBI" id="CHEBI:30616"/>
    </ligand>
</feature>
<feature type="site" description="Transition state stabilizer" evidence="1">
    <location>
        <position position="17"/>
    </location>
</feature>
<evidence type="ECO:0000255" key="1">
    <source>
        <dbReference type="HAMAP-Rule" id="MF_00151"/>
    </source>
</evidence>
<gene>
    <name evidence="1" type="primary">coaD</name>
    <name type="ordered locus">Rleg2_1748</name>
</gene>
<proteinExistence type="inferred from homology"/>
<accession>B5ZPR5</accession>
<keyword id="KW-0067">ATP-binding</keyword>
<keyword id="KW-0173">Coenzyme A biosynthesis</keyword>
<keyword id="KW-0963">Cytoplasm</keyword>
<keyword id="KW-0460">Magnesium</keyword>
<keyword id="KW-0547">Nucleotide-binding</keyword>
<keyword id="KW-0548">Nucleotidyltransferase</keyword>
<keyword id="KW-1185">Reference proteome</keyword>
<keyword id="KW-0808">Transferase</keyword>
<comment type="function">
    <text evidence="1">Reversibly transfers an adenylyl group from ATP to 4'-phosphopantetheine, yielding dephospho-CoA (dPCoA) and pyrophosphate.</text>
</comment>
<comment type="catalytic activity">
    <reaction evidence="1">
        <text>(R)-4'-phosphopantetheine + ATP + H(+) = 3'-dephospho-CoA + diphosphate</text>
        <dbReference type="Rhea" id="RHEA:19801"/>
        <dbReference type="ChEBI" id="CHEBI:15378"/>
        <dbReference type="ChEBI" id="CHEBI:30616"/>
        <dbReference type="ChEBI" id="CHEBI:33019"/>
        <dbReference type="ChEBI" id="CHEBI:57328"/>
        <dbReference type="ChEBI" id="CHEBI:61723"/>
        <dbReference type="EC" id="2.7.7.3"/>
    </reaction>
</comment>
<comment type="cofactor">
    <cofactor evidence="1">
        <name>Mg(2+)</name>
        <dbReference type="ChEBI" id="CHEBI:18420"/>
    </cofactor>
</comment>
<comment type="pathway">
    <text evidence="1">Cofactor biosynthesis; coenzyme A biosynthesis; CoA from (R)-pantothenate: step 4/5.</text>
</comment>
<comment type="subunit">
    <text evidence="1">Homohexamer.</text>
</comment>
<comment type="subcellular location">
    <subcellularLocation>
        <location evidence="1">Cytoplasm</location>
    </subcellularLocation>
</comment>
<comment type="similarity">
    <text evidence="1">Belongs to the bacterial CoaD family.</text>
</comment>
<reference key="1">
    <citation type="journal article" date="2010" name="Stand. Genomic Sci.">
        <title>Complete genome sequence of Rhizobium leguminosarum bv trifolii strain WSM2304, an effective microsymbiont of the South American clover Trifolium polymorphum.</title>
        <authorList>
            <person name="Reeve W."/>
            <person name="O'Hara G."/>
            <person name="Chain P."/>
            <person name="Ardley J."/>
            <person name="Brau L."/>
            <person name="Nandesena K."/>
            <person name="Tiwari R."/>
            <person name="Malfatti S."/>
            <person name="Kiss H."/>
            <person name="Lapidus A."/>
            <person name="Copeland A."/>
            <person name="Nolan M."/>
            <person name="Land M."/>
            <person name="Ivanova N."/>
            <person name="Mavromatis K."/>
            <person name="Markowitz V."/>
            <person name="Kyrpides N."/>
            <person name="Melino V."/>
            <person name="Denton M."/>
            <person name="Yates R."/>
            <person name="Howieson J."/>
        </authorList>
    </citation>
    <scope>NUCLEOTIDE SEQUENCE [LARGE SCALE GENOMIC DNA]</scope>
    <source>
        <strain>WSM2304</strain>
    </source>
</reference>
<sequence length="164" mass="17386">MTTAFYPGSFDPITNGHVDVLVQALNVAEKVIVAIGIHPGKAPLFSFEERAELIRLSLAEVLPGKTGDIDVVAFDNLVVDAARSHGATLLIRGLRDGTDLDYEMQMAGMNRTMAPDIQTIFLPAGTASRPITATLVRQIAAMGGDVSAFVPAAVLQALTSKRPD</sequence>
<dbReference type="EC" id="2.7.7.3" evidence="1"/>
<dbReference type="EMBL" id="CP001191">
    <property type="protein sequence ID" value="ACI55035.1"/>
    <property type="molecule type" value="Genomic_DNA"/>
</dbReference>
<dbReference type="RefSeq" id="WP_012557666.1">
    <property type="nucleotide sequence ID" value="NC_011369.1"/>
</dbReference>
<dbReference type="SMR" id="B5ZPR5"/>
<dbReference type="STRING" id="395492.Rleg2_1748"/>
<dbReference type="KEGG" id="rlt:Rleg2_1748"/>
<dbReference type="eggNOG" id="COG0669">
    <property type="taxonomic scope" value="Bacteria"/>
</dbReference>
<dbReference type="HOGENOM" id="CLU_100149_0_1_5"/>
<dbReference type="UniPathway" id="UPA00241">
    <property type="reaction ID" value="UER00355"/>
</dbReference>
<dbReference type="Proteomes" id="UP000008330">
    <property type="component" value="Chromosome"/>
</dbReference>
<dbReference type="GO" id="GO:0005737">
    <property type="term" value="C:cytoplasm"/>
    <property type="evidence" value="ECO:0007669"/>
    <property type="project" value="UniProtKB-SubCell"/>
</dbReference>
<dbReference type="GO" id="GO:0005524">
    <property type="term" value="F:ATP binding"/>
    <property type="evidence" value="ECO:0007669"/>
    <property type="project" value="UniProtKB-KW"/>
</dbReference>
<dbReference type="GO" id="GO:0004595">
    <property type="term" value="F:pantetheine-phosphate adenylyltransferase activity"/>
    <property type="evidence" value="ECO:0007669"/>
    <property type="project" value="UniProtKB-UniRule"/>
</dbReference>
<dbReference type="GO" id="GO:0015937">
    <property type="term" value="P:coenzyme A biosynthetic process"/>
    <property type="evidence" value="ECO:0007669"/>
    <property type="project" value="UniProtKB-UniRule"/>
</dbReference>
<dbReference type="CDD" id="cd02163">
    <property type="entry name" value="PPAT"/>
    <property type="match status" value="1"/>
</dbReference>
<dbReference type="Gene3D" id="3.40.50.620">
    <property type="entry name" value="HUPs"/>
    <property type="match status" value="1"/>
</dbReference>
<dbReference type="HAMAP" id="MF_00151">
    <property type="entry name" value="PPAT_bact"/>
    <property type="match status" value="1"/>
</dbReference>
<dbReference type="InterPro" id="IPR004821">
    <property type="entry name" value="Cyt_trans-like"/>
</dbReference>
<dbReference type="InterPro" id="IPR001980">
    <property type="entry name" value="PPAT"/>
</dbReference>
<dbReference type="InterPro" id="IPR014729">
    <property type="entry name" value="Rossmann-like_a/b/a_fold"/>
</dbReference>
<dbReference type="NCBIfam" id="TIGR01510">
    <property type="entry name" value="coaD_prev_kdtB"/>
    <property type="match status" value="1"/>
</dbReference>
<dbReference type="NCBIfam" id="TIGR00125">
    <property type="entry name" value="cyt_tran_rel"/>
    <property type="match status" value="1"/>
</dbReference>
<dbReference type="PANTHER" id="PTHR21342">
    <property type="entry name" value="PHOSPHOPANTETHEINE ADENYLYLTRANSFERASE"/>
    <property type="match status" value="1"/>
</dbReference>
<dbReference type="PANTHER" id="PTHR21342:SF1">
    <property type="entry name" value="PHOSPHOPANTETHEINE ADENYLYLTRANSFERASE"/>
    <property type="match status" value="1"/>
</dbReference>
<dbReference type="Pfam" id="PF01467">
    <property type="entry name" value="CTP_transf_like"/>
    <property type="match status" value="1"/>
</dbReference>
<dbReference type="PRINTS" id="PR01020">
    <property type="entry name" value="LPSBIOSNTHSS"/>
</dbReference>
<dbReference type="SUPFAM" id="SSF52374">
    <property type="entry name" value="Nucleotidylyl transferase"/>
    <property type="match status" value="1"/>
</dbReference>
<name>COAD_RHILW</name>
<protein>
    <recommendedName>
        <fullName evidence="1">Phosphopantetheine adenylyltransferase</fullName>
        <ecNumber evidence="1">2.7.7.3</ecNumber>
    </recommendedName>
    <alternativeName>
        <fullName evidence="1">Dephospho-CoA pyrophosphorylase</fullName>
    </alternativeName>
    <alternativeName>
        <fullName evidence="1">Pantetheine-phosphate adenylyltransferase</fullName>
        <shortName evidence="1">PPAT</shortName>
    </alternativeName>
</protein>
<organism>
    <name type="scientific">Rhizobium leguminosarum bv. trifolii (strain WSM2304)</name>
    <dbReference type="NCBI Taxonomy" id="395492"/>
    <lineage>
        <taxon>Bacteria</taxon>
        <taxon>Pseudomonadati</taxon>
        <taxon>Pseudomonadota</taxon>
        <taxon>Alphaproteobacteria</taxon>
        <taxon>Hyphomicrobiales</taxon>
        <taxon>Rhizobiaceae</taxon>
        <taxon>Rhizobium/Agrobacterium group</taxon>
        <taxon>Rhizobium</taxon>
    </lineage>
</organism>